<comment type="function">
    <text evidence="1">One of the primary rRNA binding proteins, it binds specifically to the 5'-end of 16S ribosomal RNA.</text>
</comment>
<comment type="subunit">
    <text evidence="1">Part of the 30S ribosomal subunit.</text>
</comment>
<comment type="similarity">
    <text evidence="1">Belongs to the universal ribosomal protein uS17 family.</text>
</comment>
<keyword id="KW-0687">Ribonucleoprotein</keyword>
<keyword id="KW-0689">Ribosomal protein</keyword>
<keyword id="KW-0694">RNA-binding</keyword>
<keyword id="KW-0699">rRNA-binding</keyword>
<gene>
    <name evidence="1" type="primary">rpsQ</name>
    <name type="ordered locus">Rmag_0174</name>
</gene>
<dbReference type="EMBL" id="CP000488">
    <property type="protein sequence ID" value="ABL01966.1"/>
    <property type="molecule type" value="Genomic_DNA"/>
</dbReference>
<dbReference type="RefSeq" id="WP_011737592.1">
    <property type="nucleotide sequence ID" value="NC_008610.1"/>
</dbReference>
<dbReference type="SMR" id="A1AVK9"/>
<dbReference type="STRING" id="413404.Rmag_0174"/>
<dbReference type="KEGG" id="rma:Rmag_0174"/>
<dbReference type="eggNOG" id="COG0186">
    <property type="taxonomic scope" value="Bacteria"/>
</dbReference>
<dbReference type="HOGENOM" id="CLU_073626_1_1_6"/>
<dbReference type="OrthoDB" id="9811714at2"/>
<dbReference type="Proteomes" id="UP000002587">
    <property type="component" value="Chromosome"/>
</dbReference>
<dbReference type="GO" id="GO:0022627">
    <property type="term" value="C:cytosolic small ribosomal subunit"/>
    <property type="evidence" value="ECO:0007669"/>
    <property type="project" value="TreeGrafter"/>
</dbReference>
<dbReference type="GO" id="GO:0019843">
    <property type="term" value="F:rRNA binding"/>
    <property type="evidence" value="ECO:0007669"/>
    <property type="project" value="UniProtKB-UniRule"/>
</dbReference>
<dbReference type="GO" id="GO:0003735">
    <property type="term" value="F:structural constituent of ribosome"/>
    <property type="evidence" value="ECO:0007669"/>
    <property type="project" value="InterPro"/>
</dbReference>
<dbReference type="GO" id="GO:0006412">
    <property type="term" value="P:translation"/>
    <property type="evidence" value="ECO:0007669"/>
    <property type="project" value="UniProtKB-UniRule"/>
</dbReference>
<dbReference type="CDD" id="cd00364">
    <property type="entry name" value="Ribosomal_uS17"/>
    <property type="match status" value="1"/>
</dbReference>
<dbReference type="Gene3D" id="2.40.50.140">
    <property type="entry name" value="Nucleic acid-binding proteins"/>
    <property type="match status" value="1"/>
</dbReference>
<dbReference type="HAMAP" id="MF_01345_B">
    <property type="entry name" value="Ribosomal_uS17_B"/>
    <property type="match status" value="1"/>
</dbReference>
<dbReference type="InterPro" id="IPR012340">
    <property type="entry name" value="NA-bd_OB-fold"/>
</dbReference>
<dbReference type="InterPro" id="IPR000266">
    <property type="entry name" value="Ribosomal_uS17"/>
</dbReference>
<dbReference type="InterPro" id="IPR019984">
    <property type="entry name" value="Ribosomal_uS17_bact/chlr"/>
</dbReference>
<dbReference type="NCBIfam" id="NF004123">
    <property type="entry name" value="PRK05610.1"/>
    <property type="match status" value="1"/>
</dbReference>
<dbReference type="NCBIfam" id="TIGR03635">
    <property type="entry name" value="uS17_bact"/>
    <property type="match status" value="1"/>
</dbReference>
<dbReference type="PANTHER" id="PTHR10744">
    <property type="entry name" value="40S RIBOSOMAL PROTEIN S11 FAMILY MEMBER"/>
    <property type="match status" value="1"/>
</dbReference>
<dbReference type="PANTHER" id="PTHR10744:SF1">
    <property type="entry name" value="SMALL RIBOSOMAL SUBUNIT PROTEIN US17M"/>
    <property type="match status" value="1"/>
</dbReference>
<dbReference type="Pfam" id="PF00366">
    <property type="entry name" value="Ribosomal_S17"/>
    <property type="match status" value="1"/>
</dbReference>
<dbReference type="PRINTS" id="PR00973">
    <property type="entry name" value="RIBOSOMALS17"/>
</dbReference>
<dbReference type="SUPFAM" id="SSF50249">
    <property type="entry name" value="Nucleic acid-binding proteins"/>
    <property type="match status" value="1"/>
</dbReference>
<accession>A1AVK9</accession>
<sequence>MSEKKVERVLTGTVVSNNRNKTIAVLIERKVRHPIYKKYIKRSTKVHAHDEKNKCALGDLVRVVEAKPFSKTKHWALLEVVEKSVFVD</sequence>
<evidence type="ECO:0000255" key="1">
    <source>
        <dbReference type="HAMAP-Rule" id="MF_01345"/>
    </source>
</evidence>
<evidence type="ECO:0000305" key="2"/>
<protein>
    <recommendedName>
        <fullName evidence="1">Small ribosomal subunit protein uS17</fullName>
    </recommendedName>
    <alternativeName>
        <fullName evidence="2">30S ribosomal protein S17</fullName>
    </alternativeName>
</protein>
<feature type="chain" id="PRO_1000214798" description="Small ribosomal subunit protein uS17">
    <location>
        <begin position="1"/>
        <end position="88"/>
    </location>
</feature>
<reference key="1">
    <citation type="journal article" date="2007" name="Science">
        <title>The Calyptogena magnifica chemoautotrophic symbiont genome.</title>
        <authorList>
            <person name="Newton I.L.G."/>
            <person name="Woyke T."/>
            <person name="Auchtung T.A."/>
            <person name="Dilly G.F."/>
            <person name="Dutton R.J."/>
            <person name="Fisher M.C."/>
            <person name="Fontanez K.M."/>
            <person name="Lau E."/>
            <person name="Stewart F.J."/>
            <person name="Richardson P.M."/>
            <person name="Barry K.W."/>
            <person name="Saunders E."/>
            <person name="Detter J.C."/>
            <person name="Wu D."/>
            <person name="Eisen J.A."/>
            <person name="Cavanaugh C.M."/>
        </authorList>
    </citation>
    <scope>NUCLEOTIDE SEQUENCE [LARGE SCALE GENOMIC DNA]</scope>
</reference>
<name>RS17_RUTMC</name>
<proteinExistence type="inferred from homology"/>
<organism>
    <name type="scientific">Ruthia magnifica subsp. Calyptogena magnifica</name>
    <dbReference type="NCBI Taxonomy" id="413404"/>
    <lineage>
        <taxon>Bacteria</taxon>
        <taxon>Pseudomonadati</taxon>
        <taxon>Pseudomonadota</taxon>
        <taxon>Gammaproteobacteria</taxon>
        <taxon>Candidatus Pseudothioglobaceae</taxon>
        <taxon>Candidatus Ruthturnera</taxon>
    </lineage>
</organism>